<reference key="1">
    <citation type="submission" date="2008-06" db="EMBL/GenBank/DDBJ databases">
        <title>Complete sequence of chromosome of Prosthecochloris aestuarii DSM 271.</title>
        <authorList>
            <consortium name="US DOE Joint Genome Institute"/>
            <person name="Lucas S."/>
            <person name="Copeland A."/>
            <person name="Lapidus A."/>
            <person name="Glavina del Rio T."/>
            <person name="Dalin E."/>
            <person name="Tice H."/>
            <person name="Bruce D."/>
            <person name="Goodwin L."/>
            <person name="Pitluck S."/>
            <person name="Schmutz J."/>
            <person name="Larimer F."/>
            <person name="Land M."/>
            <person name="Hauser L."/>
            <person name="Kyrpides N."/>
            <person name="Anderson I."/>
            <person name="Liu Z."/>
            <person name="Li T."/>
            <person name="Zhao F."/>
            <person name="Overmann J."/>
            <person name="Bryant D.A."/>
            <person name="Richardson P."/>
        </authorList>
    </citation>
    <scope>NUCLEOTIDE SEQUENCE [LARGE SCALE GENOMIC DNA]</scope>
    <source>
        <strain>DSM 271 / SK 413</strain>
    </source>
</reference>
<gene>
    <name evidence="1" type="primary">dtd</name>
    <name type="ordered locus">Paes_1867</name>
</gene>
<evidence type="ECO:0000255" key="1">
    <source>
        <dbReference type="HAMAP-Rule" id="MF_00518"/>
    </source>
</evidence>
<name>DTD_PROA2</name>
<dbReference type="EC" id="3.1.1.96" evidence="1"/>
<dbReference type="EMBL" id="CP001108">
    <property type="protein sequence ID" value="ACF46879.1"/>
    <property type="molecule type" value="Genomic_DNA"/>
</dbReference>
<dbReference type="RefSeq" id="WP_012506412.1">
    <property type="nucleotide sequence ID" value="NC_011059.1"/>
</dbReference>
<dbReference type="SMR" id="B4S4I3"/>
<dbReference type="STRING" id="290512.Paes_1867"/>
<dbReference type="KEGG" id="paa:Paes_1867"/>
<dbReference type="eggNOG" id="COG1490">
    <property type="taxonomic scope" value="Bacteria"/>
</dbReference>
<dbReference type="HOGENOM" id="CLU_076901_1_0_10"/>
<dbReference type="Proteomes" id="UP000002725">
    <property type="component" value="Chromosome"/>
</dbReference>
<dbReference type="GO" id="GO:0005737">
    <property type="term" value="C:cytoplasm"/>
    <property type="evidence" value="ECO:0007669"/>
    <property type="project" value="UniProtKB-SubCell"/>
</dbReference>
<dbReference type="GO" id="GO:0051500">
    <property type="term" value="F:D-tyrosyl-tRNA(Tyr) deacylase activity"/>
    <property type="evidence" value="ECO:0007669"/>
    <property type="project" value="TreeGrafter"/>
</dbReference>
<dbReference type="GO" id="GO:0106026">
    <property type="term" value="F:Gly-tRNA(Ala) deacylase activity"/>
    <property type="evidence" value="ECO:0007669"/>
    <property type="project" value="UniProtKB-UniRule"/>
</dbReference>
<dbReference type="GO" id="GO:0043908">
    <property type="term" value="F:Ser(Gly)-tRNA(Ala) hydrolase activity"/>
    <property type="evidence" value="ECO:0007669"/>
    <property type="project" value="UniProtKB-UniRule"/>
</dbReference>
<dbReference type="GO" id="GO:0000049">
    <property type="term" value="F:tRNA binding"/>
    <property type="evidence" value="ECO:0007669"/>
    <property type="project" value="UniProtKB-UniRule"/>
</dbReference>
<dbReference type="GO" id="GO:0019478">
    <property type="term" value="P:D-amino acid catabolic process"/>
    <property type="evidence" value="ECO:0007669"/>
    <property type="project" value="UniProtKB-UniRule"/>
</dbReference>
<dbReference type="CDD" id="cd00563">
    <property type="entry name" value="Dtyr_deacylase"/>
    <property type="match status" value="1"/>
</dbReference>
<dbReference type="FunFam" id="3.50.80.10:FF:000001">
    <property type="entry name" value="D-aminoacyl-tRNA deacylase"/>
    <property type="match status" value="1"/>
</dbReference>
<dbReference type="Gene3D" id="3.50.80.10">
    <property type="entry name" value="D-tyrosyl-tRNA(Tyr) deacylase"/>
    <property type="match status" value="1"/>
</dbReference>
<dbReference type="HAMAP" id="MF_00518">
    <property type="entry name" value="Deacylase_Dtd"/>
    <property type="match status" value="1"/>
</dbReference>
<dbReference type="InterPro" id="IPR003732">
    <property type="entry name" value="Daa-tRNA_deacyls_DTD"/>
</dbReference>
<dbReference type="InterPro" id="IPR023509">
    <property type="entry name" value="DTD-like_sf"/>
</dbReference>
<dbReference type="NCBIfam" id="TIGR00256">
    <property type="entry name" value="D-aminoacyl-tRNA deacylase"/>
    <property type="match status" value="1"/>
</dbReference>
<dbReference type="PANTHER" id="PTHR10472:SF5">
    <property type="entry name" value="D-AMINOACYL-TRNA DEACYLASE 1"/>
    <property type="match status" value="1"/>
</dbReference>
<dbReference type="PANTHER" id="PTHR10472">
    <property type="entry name" value="D-TYROSYL-TRNA TYR DEACYLASE"/>
    <property type="match status" value="1"/>
</dbReference>
<dbReference type="Pfam" id="PF02580">
    <property type="entry name" value="Tyr_Deacylase"/>
    <property type="match status" value="1"/>
</dbReference>
<dbReference type="SUPFAM" id="SSF69500">
    <property type="entry name" value="DTD-like"/>
    <property type="match status" value="1"/>
</dbReference>
<sequence>MRAVVQRVSCASLTVEGHSGAQIGPGLTVLLAIAPGDGSRDIDWMVRKLLGLRIFEDDSGKMNASVVDIRGALLIVSQFTLYGDTSRGNRPGFSASAPYETAHEIYNQFVDRLRSSSPLVVQTGVFGRDMQVSLTNDGPVTMILDTP</sequence>
<protein>
    <recommendedName>
        <fullName evidence="1">D-aminoacyl-tRNA deacylase</fullName>
        <shortName evidence="1">DTD</shortName>
        <ecNumber evidence="1">3.1.1.96</ecNumber>
    </recommendedName>
    <alternativeName>
        <fullName evidence="1">Gly-tRNA(Ala) deacylase</fullName>
    </alternativeName>
</protein>
<proteinExistence type="inferred from homology"/>
<keyword id="KW-0963">Cytoplasm</keyword>
<keyword id="KW-0378">Hydrolase</keyword>
<keyword id="KW-0694">RNA-binding</keyword>
<keyword id="KW-0820">tRNA-binding</keyword>
<feature type="chain" id="PRO_1000127558" description="D-aminoacyl-tRNA deacylase">
    <location>
        <begin position="1"/>
        <end position="147"/>
    </location>
</feature>
<feature type="short sequence motif" description="Gly-cisPro motif, important for rejection of L-amino acids" evidence="1">
    <location>
        <begin position="138"/>
        <end position="139"/>
    </location>
</feature>
<organism>
    <name type="scientific">Prosthecochloris aestuarii (strain DSM 271 / SK 413)</name>
    <dbReference type="NCBI Taxonomy" id="290512"/>
    <lineage>
        <taxon>Bacteria</taxon>
        <taxon>Pseudomonadati</taxon>
        <taxon>Chlorobiota</taxon>
        <taxon>Chlorobiia</taxon>
        <taxon>Chlorobiales</taxon>
        <taxon>Chlorobiaceae</taxon>
        <taxon>Prosthecochloris</taxon>
    </lineage>
</organism>
<comment type="function">
    <text evidence="1">An aminoacyl-tRNA editing enzyme that deacylates mischarged D-aminoacyl-tRNAs. Also deacylates mischarged glycyl-tRNA(Ala), protecting cells against glycine mischarging by AlaRS. Acts via tRNA-based rather than protein-based catalysis; rejects L-amino acids rather than detecting D-amino acids in the active site. By recycling D-aminoacyl-tRNA to D-amino acids and free tRNA molecules, this enzyme counteracts the toxicity associated with the formation of D-aminoacyl-tRNA entities in vivo and helps enforce protein L-homochirality.</text>
</comment>
<comment type="catalytic activity">
    <reaction evidence="1">
        <text>glycyl-tRNA(Ala) + H2O = tRNA(Ala) + glycine + H(+)</text>
        <dbReference type="Rhea" id="RHEA:53744"/>
        <dbReference type="Rhea" id="RHEA-COMP:9657"/>
        <dbReference type="Rhea" id="RHEA-COMP:13640"/>
        <dbReference type="ChEBI" id="CHEBI:15377"/>
        <dbReference type="ChEBI" id="CHEBI:15378"/>
        <dbReference type="ChEBI" id="CHEBI:57305"/>
        <dbReference type="ChEBI" id="CHEBI:78442"/>
        <dbReference type="ChEBI" id="CHEBI:78522"/>
        <dbReference type="EC" id="3.1.1.96"/>
    </reaction>
</comment>
<comment type="catalytic activity">
    <reaction evidence="1">
        <text>a D-aminoacyl-tRNA + H2O = a tRNA + a D-alpha-amino acid + H(+)</text>
        <dbReference type="Rhea" id="RHEA:13953"/>
        <dbReference type="Rhea" id="RHEA-COMP:10123"/>
        <dbReference type="Rhea" id="RHEA-COMP:10124"/>
        <dbReference type="ChEBI" id="CHEBI:15377"/>
        <dbReference type="ChEBI" id="CHEBI:15378"/>
        <dbReference type="ChEBI" id="CHEBI:59871"/>
        <dbReference type="ChEBI" id="CHEBI:78442"/>
        <dbReference type="ChEBI" id="CHEBI:79333"/>
        <dbReference type="EC" id="3.1.1.96"/>
    </reaction>
</comment>
<comment type="subunit">
    <text evidence="1">Homodimer.</text>
</comment>
<comment type="subcellular location">
    <subcellularLocation>
        <location evidence="1">Cytoplasm</location>
    </subcellularLocation>
</comment>
<comment type="domain">
    <text evidence="1">A Gly-cisPro motif from one monomer fits into the active site of the other monomer to allow specific chiral rejection of L-amino acids.</text>
</comment>
<comment type="similarity">
    <text evidence="1">Belongs to the DTD family.</text>
</comment>
<accession>B4S4I3</accession>